<organism>
    <name type="scientific">Mycobacterium sp. (strain KMS)</name>
    <dbReference type="NCBI Taxonomy" id="189918"/>
    <lineage>
        <taxon>Bacteria</taxon>
        <taxon>Bacillati</taxon>
        <taxon>Actinomycetota</taxon>
        <taxon>Actinomycetes</taxon>
        <taxon>Mycobacteriales</taxon>
        <taxon>Mycobacteriaceae</taxon>
        <taxon>Mycobacterium</taxon>
    </lineage>
</organism>
<keyword id="KW-0028">Amino-acid biosynthesis</keyword>
<keyword id="KW-0032">Aminotransferase</keyword>
<keyword id="KW-0963">Cytoplasm</keyword>
<keyword id="KW-0663">Pyridoxal phosphate</keyword>
<keyword id="KW-0664">Pyridoxine biosynthesis</keyword>
<keyword id="KW-0718">Serine biosynthesis</keyword>
<keyword id="KW-0808">Transferase</keyword>
<reference key="1">
    <citation type="submission" date="2006-12" db="EMBL/GenBank/DDBJ databases">
        <title>Complete sequence of chromosome of Mycobacterium sp. KMS.</title>
        <authorList>
            <consortium name="US DOE Joint Genome Institute"/>
            <person name="Copeland A."/>
            <person name="Lucas S."/>
            <person name="Lapidus A."/>
            <person name="Barry K."/>
            <person name="Detter J.C."/>
            <person name="Glavina del Rio T."/>
            <person name="Hammon N."/>
            <person name="Israni S."/>
            <person name="Dalin E."/>
            <person name="Tice H."/>
            <person name="Pitluck S."/>
            <person name="Kiss H."/>
            <person name="Brettin T."/>
            <person name="Bruce D."/>
            <person name="Han C."/>
            <person name="Tapia R."/>
            <person name="Gilna P."/>
            <person name="Schmutz J."/>
            <person name="Larimer F."/>
            <person name="Land M."/>
            <person name="Hauser L."/>
            <person name="Kyrpides N."/>
            <person name="Mikhailova N."/>
            <person name="Miller C.D."/>
            <person name="Richardson P."/>
        </authorList>
    </citation>
    <scope>NUCLEOTIDE SEQUENCE [LARGE SCALE GENOMIC DNA]</scope>
    <source>
        <strain>KMS</strain>
    </source>
</reference>
<comment type="function">
    <text evidence="1">Catalyzes the reversible conversion of 3-phosphohydroxypyruvate to phosphoserine and of 3-hydroxy-2-oxo-4-phosphonooxybutanoate to phosphohydroxythreonine.</text>
</comment>
<comment type="catalytic activity">
    <reaction evidence="1">
        <text>O-phospho-L-serine + 2-oxoglutarate = 3-phosphooxypyruvate + L-glutamate</text>
        <dbReference type="Rhea" id="RHEA:14329"/>
        <dbReference type="ChEBI" id="CHEBI:16810"/>
        <dbReference type="ChEBI" id="CHEBI:18110"/>
        <dbReference type="ChEBI" id="CHEBI:29985"/>
        <dbReference type="ChEBI" id="CHEBI:57524"/>
        <dbReference type="EC" id="2.6.1.52"/>
    </reaction>
</comment>
<comment type="catalytic activity">
    <reaction evidence="1">
        <text>4-(phosphooxy)-L-threonine + 2-oxoglutarate = (R)-3-hydroxy-2-oxo-4-phosphooxybutanoate + L-glutamate</text>
        <dbReference type="Rhea" id="RHEA:16573"/>
        <dbReference type="ChEBI" id="CHEBI:16810"/>
        <dbReference type="ChEBI" id="CHEBI:29985"/>
        <dbReference type="ChEBI" id="CHEBI:58452"/>
        <dbReference type="ChEBI" id="CHEBI:58538"/>
        <dbReference type="EC" id="2.6.1.52"/>
    </reaction>
</comment>
<comment type="cofactor">
    <cofactor evidence="1">
        <name>pyridoxal 5'-phosphate</name>
        <dbReference type="ChEBI" id="CHEBI:597326"/>
    </cofactor>
    <text evidence="1">Binds 1 pyridoxal phosphate per subunit.</text>
</comment>
<comment type="pathway">
    <text evidence="1">Amino-acid biosynthesis; L-serine biosynthesis; L-serine from 3-phospho-D-glycerate: step 2/3.</text>
</comment>
<comment type="pathway">
    <text evidence="1">Cofactor biosynthesis; pyridoxine 5'-phosphate biosynthesis; pyridoxine 5'-phosphate from D-erythrose 4-phosphate: step 3/5.</text>
</comment>
<comment type="subunit">
    <text evidence="1">Homodimer.</text>
</comment>
<comment type="subcellular location">
    <subcellularLocation>
        <location evidence="1">Cytoplasm</location>
    </subcellularLocation>
</comment>
<comment type="similarity">
    <text evidence="1">Belongs to the class-V pyridoxal-phosphate-dependent aminotransferase family. SerC subfamily.</text>
</comment>
<dbReference type="EC" id="2.6.1.52" evidence="1"/>
<dbReference type="EMBL" id="CP000518">
    <property type="protein sequence ID" value="ABL93742.1"/>
    <property type="molecule type" value="Genomic_DNA"/>
</dbReference>
<dbReference type="SMR" id="A1ULN4"/>
<dbReference type="STRING" id="189918.Mkms_4551"/>
<dbReference type="KEGG" id="mkm:Mkms_4551"/>
<dbReference type="HOGENOM" id="CLU_061974_0_0_11"/>
<dbReference type="OrthoDB" id="975012at2"/>
<dbReference type="UniPathway" id="UPA00135">
    <property type="reaction ID" value="UER00197"/>
</dbReference>
<dbReference type="UniPathway" id="UPA00244">
    <property type="reaction ID" value="UER00311"/>
</dbReference>
<dbReference type="GO" id="GO:0005737">
    <property type="term" value="C:cytoplasm"/>
    <property type="evidence" value="ECO:0007669"/>
    <property type="project" value="UniProtKB-SubCell"/>
</dbReference>
<dbReference type="GO" id="GO:0008453">
    <property type="term" value="F:alanine-glyoxylate transaminase activity"/>
    <property type="evidence" value="ECO:0007669"/>
    <property type="project" value="TreeGrafter"/>
</dbReference>
<dbReference type="GO" id="GO:0004760">
    <property type="term" value="F:L-serine-pyruvate transaminase activity"/>
    <property type="evidence" value="ECO:0007669"/>
    <property type="project" value="TreeGrafter"/>
</dbReference>
<dbReference type="GO" id="GO:0004648">
    <property type="term" value="F:O-phospho-L-serine:2-oxoglutarate aminotransferase activity"/>
    <property type="evidence" value="ECO:0007669"/>
    <property type="project" value="UniProtKB-UniRule"/>
</dbReference>
<dbReference type="GO" id="GO:0030170">
    <property type="term" value="F:pyridoxal phosphate binding"/>
    <property type="evidence" value="ECO:0007669"/>
    <property type="project" value="UniProtKB-UniRule"/>
</dbReference>
<dbReference type="GO" id="GO:0019265">
    <property type="term" value="P:glycine biosynthetic process, by transamination of glyoxylate"/>
    <property type="evidence" value="ECO:0007669"/>
    <property type="project" value="TreeGrafter"/>
</dbReference>
<dbReference type="GO" id="GO:0006564">
    <property type="term" value="P:L-serine biosynthetic process"/>
    <property type="evidence" value="ECO:0007669"/>
    <property type="project" value="UniProtKB-UniRule"/>
</dbReference>
<dbReference type="GO" id="GO:0008615">
    <property type="term" value="P:pyridoxine biosynthetic process"/>
    <property type="evidence" value="ECO:0007669"/>
    <property type="project" value="UniProtKB-UniRule"/>
</dbReference>
<dbReference type="Gene3D" id="3.90.1150.10">
    <property type="entry name" value="Aspartate Aminotransferase, domain 1"/>
    <property type="match status" value="1"/>
</dbReference>
<dbReference type="Gene3D" id="3.40.640.10">
    <property type="entry name" value="Type I PLP-dependent aspartate aminotransferase-like (Major domain)"/>
    <property type="match status" value="1"/>
</dbReference>
<dbReference type="HAMAP" id="MF_00160">
    <property type="entry name" value="SerC_aminotrans_5"/>
    <property type="match status" value="1"/>
</dbReference>
<dbReference type="InterPro" id="IPR000192">
    <property type="entry name" value="Aminotrans_V_dom"/>
</dbReference>
<dbReference type="InterPro" id="IPR022278">
    <property type="entry name" value="Pser_aminoTfrase"/>
</dbReference>
<dbReference type="InterPro" id="IPR006272">
    <property type="entry name" value="Pser_aminoTfrase_mycobac"/>
</dbReference>
<dbReference type="InterPro" id="IPR015424">
    <property type="entry name" value="PyrdxlP-dep_Trfase"/>
</dbReference>
<dbReference type="InterPro" id="IPR015421">
    <property type="entry name" value="PyrdxlP-dep_Trfase_major"/>
</dbReference>
<dbReference type="InterPro" id="IPR015422">
    <property type="entry name" value="PyrdxlP-dep_Trfase_small"/>
</dbReference>
<dbReference type="NCBIfam" id="TIGR01366">
    <property type="entry name" value="serC_3"/>
    <property type="match status" value="1"/>
</dbReference>
<dbReference type="PANTHER" id="PTHR21152:SF40">
    <property type="entry name" value="ALANINE--GLYOXYLATE AMINOTRANSFERASE"/>
    <property type="match status" value="1"/>
</dbReference>
<dbReference type="PANTHER" id="PTHR21152">
    <property type="entry name" value="AMINOTRANSFERASE CLASS V"/>
    <property type="match status" value="1"/>
</dbReference>
<dbReference type="Pfam" id="PF00266">
    <property type="entry name" value="Aminotran_5"/>
    <property type="match status" value="1"/>
</dbReference>
<dbReference type="PIRSF" id="PIRSF000525">
    <property type="entry name" value="SerC"/>
    <property type="match status" value="1"/>
</dbReference>
<dbReference type="SUPFAM" id="SSF53383">
    <property type="entry name" value="PLP-dependent transferases"/>
    <property type="match status" value="1"/>
</dbReference>
<evidence type="ECO:0000255" key="1">
    <source>
        <dbReference type="HAMAP-Rule" id="MF_00160"/>
    </source>
</evidence>
<evidence type="ECO:0000256" key="2">
    <source>
        <dbReference type="SAM" id="MobiDB-lite"/>
    </source>
</evidence>
<sequence length="370" mass="39170">MAELTIPADLKPRDGRFGSGPSKVRPEQLQALAAAGDLFGTSHRQAPVKNLVGRVRDGIKQLFSVPEGYDVILGNGGSTAFWDAAAFGLIDKRSLHLTYGEFSAKFASAVAKNPFVGDPIVVKADPGSAPEPQSDPSVDVIAWAHNETSTGVAVPVQRPADSGDALIVIDATSGAGGLPVDIAQADAYYFAPQKNFAGDGGLWLAVVSPAALARIEAIGQSGRWVPDFLSLPIAVENSLKNQTYNTPAIGTLVLLADQLDWLNGNGGLDWAVKRTADSSQRLYSWAEASSYATPFVTDPALRSQVVGTIDFADDVDAAAVAKVLRANGIVDTEPYRKLGRNQLRVAMFAAVDPEDVSALTRCVDWVVERL</sequence>
<accession>A1ULN4</accession>
<name>SERC_MYCSK</name>
<protein>
    <recommendedName>
        <fullName>Putative phosphoserine aminotransferase</fullName>
        <ecNumber evidence="1">2.6.1.52</ecNumber>
    </recommendedName>
    <alternativeName>
        <fullName evidence="1">Phosphohydroxythreonine aminotransferase</fullName>
        <shortName evidence="1">PSAT</shortName>
    </alternativeName>
</protein>
<proteinExistence type="inferred from homology"/>
<feature type="chain" id="PRO_0000293587" description="Putative phosphoserine aminotransferase">
    <location>
        <begin position="1"/>
        <end position="370"/>
    </location>
</feature>
<feature type="region of interest" description="Disordered" evidence="2">
    <location>
        <begin position="1"/>
        <end position="22"/>
    </location>
</feature>
<feature type="binding site" evidence="1">
    <location>
        <position position="44"/>
    </location>
    <ligand>
        <name>L-glutamate</name>
        <dbReference type="ChEBI" id="CHEBI:29985"/>
    </ligand>
</feature>
<feature type="binding site" evidence="1">
    <location>
        <position position="102"/>
    </location>
    <ligand>
        <name>pyridoxal 5'-phosphate</name>
        <dbReference type="ChEBI" id="CHEBI:597326"/>
    </ligand>
</feature>
<feature type="binding site" evidence="1">
    <location>
        <position position="148"/>
    </location>
    <ligand>
        <name>pyridoxal 5'-phosphate</name>
        <dbReference type="ChEBI" id="CHEBI:597326"/>
    </ligand>
</feature>
<feature type="binding site" evidence="1">
    <location>
        <position position="170"/>
    </location>
    <ligand>
        <name>pyridoxal 5'-phosphate</name>
        <dbReference type="ChEBI" id="CHEBI:597326"/>
    </ligand>
</feature>
<feature type="binding site" evidence="1">
    <location>
        <position position="193"/>
    </location>
    <ligand>
        <name>pyridoxal 5'-phosphate</name>
        <dbReference type="ChEBI" id="CHEBI:597326"/>
    </ligand>
</feature>
<feature type="binding site" evidence="1">
    <location>
        <begin position="245"/>
        <end position="246"/>
    </location>
    <ligand>
        <name>pyridoxal 5'-phosphate</name>
        <dbReference type="ChEBI" id="CHEBI:597326"/>
    </ligand>
</feature>
<feature type="modified residue" description="N6-(pyridoxal phosphate)lysine" evidence="1">
    <location>
        <position position="194"/>
    </location>
</feature>
<gene>
    <name evidence="1" type="primary">serC</name>
    <name type="ordered locus">Mkms_4551</name>
</gene>